<proteinExistence type="inferred from homology"/>
<comment type="function">
    <text evidence="1">The RuvA-RuvB-RuvC complex processes Holliday junction (HJ) DNA during genetic recombination and DNA repair, while the RuvA-RuvB complex plays an important role in the rescue of blocked DNA replication forks via replication fork reversal (RFR). RuvA specifically binds to HJ cruciform DNA, conferring on it an open structure. The RuvB hexamer acts as an ATP-dependent pump, pulling dsDNA into and through the RuvAB complex. RuvB forms 2 homohexamers on either side of HJ DNA bound by 1 or 2 RuvA tetramers; 4 subunits per hexamer contact DNA at a time. Coordinated motions by a converter formed by DNA-disengaged RuvB subunits stimulates ATP hydrolysis and nucleotide exchange. Immobilization of the converter enables RuvB to convert the ATP-contained energy into a lever motion, pulling 2 nucleotides of DNA out of the RuvA tetramer per ATP hydrolyzed, thus driving DNA branch migration. The RuvB motors rotate together with the DNA substrate, which together with the progressing nucleotide cycle form the mechanistic basis for DNA recombination by continuous HJ branch migration. Branch migration allows RuvC to scan DNA until it finds its consensus sequence, where it cleaves and resolves cruciform DNA.</text>
</comment>
<comment type="catalytic activity">
    <reaction evidence="1">
        <text>ATP + H2O = ADP + phosphate + H(+)</text>
        <dbReference type="Rhea" id="RHEA:13065"/>
        <dbReference type="ChEBI" id="CHEBI:15377"/>
        <dbReference type="ChEBI" id="CHEBI:15378"/>
        <dbReference type="ChEBI" id="CHEBI:30616"/>
        <dbReference type="ChEBI" id="CHEBI:43474"/>
        <dbReference type="ChEBI" id="CHEBI:456216"/>
    </reaction>
</comment>
<comment type="subunit">
    <text evidence="1">Homohexamer. Forms an RuvA(8)-RuvB(12)-Holliday junction (HJ) complex. HJ DNA is sandwiched between 2 RuvA tetramers; dsDNA enters through RuvA and exits via RuvB. An RuvB hexamer assembles on each DNA strand where it exits the tetramer. Each RuvB hexamer is contacted by two RuvA subunits (via domain III) on 2 adjacent RuvB subunits; this complex drives branch migration. In the full resolvosome a probable DNA-RuvA(4)-RuvB(12)-RuvC(2) complex forms which resolves the HJ.</text>
</comment>
<comment type="subcellular location">
    <subcellularLocation>
        <location evidence="1">Cytoplasm</location>
    </subcellularLocation>
</comment>
<comment type="domain">
    <text evidence="1">Has 3 domains, the large (RuvB-L) and small ATPase (RuvB-S) domains and the C-terminal head (RuvB-H) domain. The head domain binds DNA, while the ATPase domains jointly bind ATP, ADP or are empty depending on the state of the subunit in the translocation cycle. During a single DNA translocation step the structure of each domain remains the same, but their relative positions change.</text>
</comment>
<comment type="similarity">
    <text evidence="1">Belongs to the RuvB family.</text>
</comment>
<organism>
    <name type="scientific">Klebsiella pneumoniae (strain 342)</name>
    <dbReference type="NCBI Taxonomy" id="507522"/>
    <lineage>
        <taxon>Bacteria</taxon>
        <taxon>Pseudomonadati</taxon>
        <taxon>Pseudomonadota</taxon>
        <taxon>Gammaproteobacteria</taxon>
        <taxon>Enterobacterales</taxon>
        <taxon>Enterobacteriaceae</taxon>
        <taxon>Klebsiella/Raoultella group</taxon>
        <taxon>Klebsiella</taxon>
        <taxon>Klebsiella pneumoniae complex</taxon>
    </lineage>
</organism>
<sequence length="336" mass="37084">MIEADRLVSADSSGAEEAVDRAIRPKLLAEYVGQPQVRSQMEIFIQAAKLRGDALDHLLIFGPPGLGKTTLANIVANEMGVNLRTTSGPVLEKAGDLAAMLTNLEPHDVLFIDEIHRLSPVVEEVLYPAMEDYQLDIMIGEGPAARSIKIDLPPFTLIGATTRAGSLTSPLRDRFGIVQRLEFYQIPDLQHIVSRSARHMGLEMSDEGALEVARRSRGTPRIANRLLRRVRDFAEVRHDGSISADIAAQALDMLNVDAEGFDYMDRKLLLAVIDKFFGGPVGLDNLAAAIGEERETIEDVLEPYLIQQGFLQRTPRGRMATVRAWNHFGITPPEMP</sequence>
<feature type="chain" id="PRO_1000089653" description="Holliday junction branch migration complex subunit RuvB">
    <location>
        <begin position="1"/>
        <end position="336"/>
    </location>
</feature>
<feature type="region of interest" description="Large ATPase domain (RuvB-L)" evidence="1">
    <location>
        <begin position="4"/>
        <end position="184"/>
    </location>
</feature>
<feature type="region of interest" description="Small ATPAse domain (RuvB-S)" evidence="1">
    <location>
        <begin position="185"/>
        <end position="255"/>
    </location>
</feature>
<feature type="region of interest" description="Head domain (RuvB-H)" evidence="1">
    <location>
        <begin position="258"/>
        <end position="336"/>
    </location>
</feature>
<feature type="binding site" evidence="1">
    <location>
        <position position="23"/>
    </location>
    <ligand>
        <name>ATP</name>
        <dbReference type="ChEBI" id="CHEBI:30616"/>
    </ligand>
</feature>
<feature type="binding site" evidence="1">
    <location>
        <position position="24"/>
    </location>
    <ligand>
        <name>ATP</name>
        <dbReference type="ChEBI" id="CHEBI:30616"/>
    </ligand>
</feature>
<feature type="binding site" evidence="1">
    <location>
        <position position="65"/>
    </location>
    <ligand>
        <name>ATP</name>
        <dbReference type="ChEBI" id="CHEBI:30616"/>
    </ligand>
</feature>
<feature type="binding site" evidence="1">
    <location>
        <position position="68"/>
    </location>
    <ligand>
        <name>ATP</name>
        <dbReference type="ChEBI" id="CHEBI:30616"/>
    </ligand>
</feature>
<feature type="binding site" evidence="1">
    <location>
        <position position="69"/>
    </location>
    <ligand>
        <name>ATP</name>
        <dbReference type="ChEBI" id="CHEBI:30616"/>
    </ligand>
</feature>
<feature type="binding site" evidence="1">
    <location>
        <position position="69"/>
    </location>
    <ligand>
        <name>Mg(2+)</name>
        <dbReference type="ChEBI" id="CHEBI:18420"/>
    </ligand>
</feature>
<feature type="binding site" evidence="1">
    <location>
        <position position="70"/>
    </location>
    <ligand>
        <name>ATP</name>
        <dbReference type="ChEBI" id="CHEBI:30616"/>
    </ligand>
</feature>
<feature type="binding site" evidence="1">
    <location>
        <begin position="131"/>
        <end position="133"/>
    </location>
    <ligand>
        <name>ATP</name>
        <dbReference type="ChEBI" id="CHEBI:30616"/>
    </ligand>
</feature>
<feature type="binding site" evidence="1">
    <location>
        <position position="174"/>
    </location>
    <ligand>
        <name>ATP</name>
        <dbReference type="ChEBI" id="CHEBI:30616"/>
    </ligand>
</feature>
<feature type="binding site" evidence="1">
    <location>
        <position position="184"/>
    </location>
    <ligand>
        <name>ATP</name>
        <dbReference type="ChEBI" id="CHEBI:30616"/>
    </ligand>
</feature>
<feature type="binding site" evidence="1">
    <location>
        <position position="221"/>
    </location>
    <ligand>
        <name>ATP</name>
        <dbReference type="ChEBI" id="CHEBI:30616"/>
    </ligand>
</feature>
<feature type="binding site" evidence="1">
    <location>
        <position position="294"/>
    </location>
    <ligand>
        <name>DNA</name>
        <dbReference type="ChEBI" id="CHEBI:16991"/>
    </ligand>
</feature>
<feature type="binding site" evidence="1">
    <location>
        <position position="313"/>
    </location>
    <ligand>
        <name>DNA</name>
        <dbReference type="ChEBI" id="CHEBI:16991"/>
    </ligand>
</feature>
<feature type="binding site" evidence="1">
    <location>
        <position position="318"/>
    </location>
    <ligand>
        <name>DNA</name>
        <dbReference type="ChEBI" id="CHEBI:16991"/>
    </ligand>
</feature>
<accession>B5XQ05</accession>
<dbReference type="EC" id="3.6.4.-" evidence="1"/>
<dbReference type="EMBL" id="CP000964">
    <property type="protein sequence ID" value="ACI11755.1"/>
    <property type="molecule type" value="Genomic_DNA"/>
</dbReference>
<dbReference type="SMR" id="B5XQ05"/>
<dbReference type="KEGG" id="kpe:KPK_1909"/>
<dbReference type="HOGENOM" id="CLU_055599_1_0_6"/>
<dbReference type="Proteomes" id="UP000001734">
    <property type="component" value="Chromosome"/>
</dbReference>
<dbReference type="GO" id="GO:0005737">
    <property type="term" value="C:cytoplasm"/>
    <property type="evidence" value="ECO:0007669"/>
    <property type="project" value="UniProtKB-SubCell"/>
</dbReference>
<dbReference type="GO" id="GO:0048476">
    <property type="term" value="C:Holliday junction resolvase complex"/>
    <property type="evidence" value="ECO:0007669"/>
    <property type="project" value="UniProtKB-UniRule"/>
</dbReference>
<dbReference type="GO" id="GO:0005524">
    <property type="term" value="F:ATP binding"/>
    <property type="evidence" value="ECO:0007669"/>
    <property type="project" value="UniProtKB-UniRule"/>
</dbReference>
<dbReference type="GO" id="GO:0016887">
    <property type="term" value="F:ATP hydrolysis activity"/>
    <property type="evidence" value="ECO:0007669"/>
    <property type="project" value="InterPro"/>
</dbReference>
<dbReference type="GO" id="GO:0000400">
    <property type="term" value="F:four-way junction DNA binding"/>
    <property type="evidence" value="ECO:0007669"/>
    <property type="project" value="UniProtKB-UniRule"/>
</dbReference>
<dbReference type="GO" id="GO:0009378">
    <property type="term" value="F:four-way junction helicase activity"/>
    <property type="evidence" value="ECO:0007669"/>
    <property type="project" value="InterPro"/>
</dbReference>
<dbReference type="GO" id="GO:0006310">
    <property type="term" value="P:DNA recombination"/>
    <property type="evidence" value="ECO:0007669"/>
    <property type="project" value="UniProtKB-UniRule"/>
</dbReference>
<dbReference type="GO" id="GO:0006281">
    <property type="term" value="P:DNA repair"/>
    <property type="evidence" value="ECO:0007669"/>
    <property type="project" value="UniProtKB-UniRule"/>
</dbReference>
<dbReference type="CDD" id="cd00009">
    <property type="entry name" value="AAA"/>
    <property type="match status" value="1"/>
</dbReference>
<dbReference type="FunFam" id="1.10.10.10:FF:000086">
    <property type="entry name" value="Holliday junction ATP-dependent DNA helicase RuvB"/>
    <property type="match status" value="1"/>
</dbReference>
<dbReference type="FunFam" id="1.10.8.60:FF:000023">
    <property type="entry name" value="Holliday junction ATP-dependent DNA helicase RuvB"/>
    <property type="match status" value="1"/>
</dbReference>
<dbReference type="FunFam" id="3.40.50.300:FF:000073">
    <property type="entry name" value="Holliday junction ATP-dependent DNA helicase RuvB"/>
    <property type="match status" value="1"/>
</dbReference>
<dbReference type="Gene3D" id="1.10.8.60">
    <property type="match status" value="1"/>
</dbReference>
<dbReference type="Gene3D" id="3.40.50.300">
    <property type="entry name" value="P-loop containing nucleotide triphosphate hydrolases"/>
    <property type="match status" value="1"/>
</dbReference>
<dbReference type="Gene3D" id="1.10.10.10">
    <property type="entry name" value="Winged helix-like DNA-binding domain superfamily/Winged helix DNA-binding domain"/>
    <property type="match status" value="1"/>
</dbReference>
<dbReference type="HAMAP" id="MF_00016">
    <property type="entry name" value="DNA_HJ_migration_RuvB"/>
    <property type="match status" value="1"/>
</dbReference>
<dbReference type="InterPro" id="IPR003593">
    <property type="entry name" value="AAA+_ATPase"/>
</dbReference>
<dbReference type="InterPro" id="IPR041445">
    <property type="entry name" value="AAA_lid_4"/>
</dbReference>
<dbReference type="InterPro" id="IPR004605">
    <property type="entry name" value="DNA_helicase_Holl-junc_RuvB"/>
</dbReference>
<dbReference type="InterPro" id="IPR027417">
    <property type="entry name" value="P-loop_NTPase"/>
</dbReference>
<dbReference type="InterPro" id="IPR008824">
    <property type="entry name" value="RuvB-like_N"/>
</dbReference>
<dbReference type="InterPro" id="IPR008823">
    <property type="entry name" value="RuvB_C"/>
</dbReference>
<dbReference type="InterPro" id="IPR036388">
    <property type="entry name" value="WH-like_DNA-bd_sf"/>
</dbReference>
<dbReference type="InterPro" id="IPR036390">
    <property type="entry name" value="WH_DNA-bd_sf"/>
</dbReference>
<dbReference type="NCBIfam" id="NF000868">
    <property type="entry name" value="PRK00080.1"/>
    <property type="match status" value="1"/>
</dbReference>
<dbReference type="NCBIfam" id="TIGR00635">
    <property type="entry name" value="ruvB"/>
    <property type="match status" value="1"/>
</dbReference>
<dbReference type="PANTHER" id="PTHR42848">
    <property type="match status" value="1"/>
</dbReference>
<dbReference type="PANTHER" id="PTHR42848:SF1">
    <property type="entry name" value="HOLLIDAY JUNCTION BRANCH MIGRATION COMPLEX SUBUNIT RUVB"/>
    <property type="match status" value="1"/>
</dbReference>
<dbReference type="Pfam" id="PF17864">
    <property type="entry name" value="AAA_lid_4"/>
    <property type="match status" value="1"/>
</dbReference>
<dbReference type="Pfam" id="PF05491">
    <property type="entry name" value="RuvB_C"/>
    <property type="match status" value="1"/>
</dbReference>
<dbReference type="Pfam" id="PF05496">
    <property type="entry name" value="RuvB_N"/>
    <property type="match status" value="1"/>
</dbReference>
<dbReference type="SMART" id="SM00382">
    <property type="entry name" value="AAA"/>
    <property type="match status" value="1"/>
</dbReference>
<dbReference type="SUPFAM" id="SSF52540">
    <property type="entry name" value="P-loop containing nucleoside triphosphate hydrolases"/>
    <property type="match status" value="1"/>
</dbReference>
<dbReference type="SUPFAM" id="SSF46785">
    <property type="entry name" value="Winged helix' DNA-binding domain"/>
    <property type="match status" value="1"/>
</dbReference>
<name>RUVB_KLEP3</name>
<gene>
    <name evidence="1" type="primary">ruvB</name>
    <name type="ordered locus">KPK_1909</name>
</gene>
<evidence type="ECO:0000255" key="1">
    <source>
        <dbReference type="HAMAP-Rule" id="MF_00016"/>
    </source>
</evidence>
<reference key="1">
    <citation type="journal article" date="2008" name="PLoS Genet.">
        <title>Complete genome sequence of the N2-fixing broad host range endophyte Klebsiella pneumoniae 342 and virulence predictions verified in mice.</title>
        <authorList>
            <person name="Fouts D.E."/>
            <person name="Tyler H.L."/>
            <person name="DeBoy R.T."/>
            <person name="Daugherty S."/>
            <person name="Ren Q."/>
            <person name="Badger J.H."/>
            <person name="Durkin A.S."/>
            <person name="Huot H."/>
            <person name="Shrivastava S."/>
            <person name="Kothari S."/>
            <person name="Dodson R.J."/>
            <person name="Mohamoud Y."/>
            <person name="Khouri H."/>
            <person name="Roesch L.F.W."/>
            <person name="Krogfelt K.A."/>
            <person name="Struve C."/>
            <person name="Triplett E.W."/>
            <person name="Methe B.A."/>
        </authorList>
    </citation>
    <scope>NUCLEOTIDE SEQUENCE [LARGE SCALE GENOMIC DNA]</scope>
    <source>
        <strain>342</strain>
    </source>
</reference>
<protein>
    <recommendedName>
        <fullName evidence="1">Holliday junction branch migration complex subunit RuvB</fullName>
        <ecNumber evidence="1">3.6.4.-</ecNumber>
    </recommendedName>
</protein>
<keyword id="KW-0067">ATP-binding</keyword>
<keyword id="KW-0963">Cytoplasm</keyword>
<keyword id="KW-0227">DNA damage</keyword>
<keyword id="KW-0233">DNA recombination</keyword>
<keyword id="KW-0234">DNA repair</keyword>
<keyword id="KW-0238">DNA-binding</keyword>
<keyword id="KW-0378">Hydrolase</keyword>
<keyword id="KW-0547">Nucleotide-binding</keyword>